<organism>
    <name type="scientific">Salmonella enteritidis PT4 (strain P125109)</name>
    <dbReference type="NCBI Taxonomy" id="550537"/>
    <lineage>
        <taxon>Bacteria</taxon>
        <taxon>Pseudomonadati</taxon>
        <taxon>Pseudomonadota</taxon>
        <taxon>Gammaproteobacteria</taxon>
        <taxon>Enterobacterales</taxon>
        <taxon>Enterobacteriaceae</taxon>
        <taxon>Salmonella</taxon>
    </lineage>
</organism>
<protein>
    <recommendedName>
        <fullName evidence="1">Ribosome maturation factor RimP</fullName>
    </recommendedName>
</protein>
<comment type="function">
    <text evidence="1">Required for maturation of 30S ribosomal subunits.</text>
</comment>
<comment type="subcellular location">
    <subcellularLocation>
        <location evidence="1">Cytoplasm</location>
    </subcellularLocation>
</comment>
<comment type="similarity">
    <text evidence="1">Belongs to the RimP family.</text>
</comment>
<comment type="sequence caution" evidence="2">
    <conflict type="erroneous initiation">
        <sequence resource="EMBL-CDS" id="CAR34699"/>
    </conflict>
</comment>
<gene>
    <name evidence="1" type="primary">rimP</name>
    <name type="ordered locus">SEN3123</name>
</gene>
<accession>B5QZW0</accession>
<feature type="chain" id="PRO_0000384760" description="Ribosome maturation factor RimP">
    <location>
        <begin position="1"/>
        <end position="152"/>
    </location>
</feature>
<dbReference type="EMBL" id="AM933172">
    <property type="protein sequence ID" value="CAR34699.1"/>
    <property type="status" value="ALT_INIT"/>
    <property type="molecule type" value="Genomic_DNA"/>
</dbReference>
<dbReference type="SMR" id="B5QZW0"/>
<dbReference type="KEGG" id="set:SEN3123"/>
<dbReference type="HOGENOM" id="CLU_070525_1_1_6"/>
<dbReference type="Proteomes" id="UP000000613">
    <property type="component" value="Chromosome"/>
</dbReference>
<dbReference type="GO" id="GO:0005829">
    <property type="term" value="C:cytosol"/>
    <property type="evidence" value="ECO:0007669"/>
    <property type="project" value="TreeGrafter"/>
</dbReference>
<dbReference type="GO" id="GO:0000028">
    <property type="term" value="P:ribosomal small subunit assembly"/>
    <property type="evidence" value="ECO:0007669"/>
    <property type="project" value="TreeGrafter"/>
</dbReference>
<dbReference type="GO" id="GO:0006412">
    <property type="term" value="P:translation"/>
    <property type="evidence" value="ECO:0007669"/>
    <property type="project" value="TreeGrafter"/>
</dbReference>
<dbReference type="CDD" id="cd01734">
    <property type="entry name" value="YlxS_C"/>
    <property type="match status" value="1"/>
</dbReference>
<dbReference type="FunFam" id="2.30.30.180:FF:000001">
    <property type="entry name" value="Ribosome maturation factor RimP"/>
    <property type="match status" value="1"/>
</dbReference>
<dbReference type="FunFam" id="3.30.300.70:FF:000001">
    <property type="entry name" value="Ribosome maturation factor RimP"/>
    <property type="match status" value="1"/>
</dbReference>
<dbReference type="Gene3D" id="2.30.30.180">
    <property type="entry name" value="Ribosome maturation factor RimP, C-terminal domain"/>
    <property type="match status" value="1"/>
</dbReference>
<dbReference type="Gene3D" id="3.30.300.70">
    <property type="entry name" value="RimP-like superfamily, N-terminal"/>
    <property type="match status" value="1"/>
</dbReference>
<dbReference type="HAMAP" id="MF_01077">
    <property type="entry name" value="RimP"/>
    <property type="match status" value="1"/>
</dbReference>
<dbReference type="InterPro" id="IPR003728">
    <property type="entry name" value="Ribosome_maturation_RimP"/>
</dbReference>
<dbReference type="InterPro" id="IPR028998">
    <property type="entry name" value="RimP_C"/>
</dbReference>
<dbReference type="InterPro" id="IPR036847">
    <property type="entry name" value="RimP_C_sf"/>
</dbReference>
<dbReference type="InterPro" id="IPR028989">
    <property type="entry name" value="RimP_N"/>
</dbReference>
<dbReference type="InterPro" id="IPR035956">
    <property type="entry name" value="RimP_N_sf"/>
</dbReference>
<dbReference type="NCBIfam" id="NF000927">
    <property type="entry name" value="PRK00092.1-1"/>
    <property type="match status" value="1"/>
</dbReference>
<dbReference type="PANTHER" id="PTHR33867">
    <property type="entry name" value="RIBOSOME MATURATION FACTOR RIMP"/>
    <property type="match status" value="1"/>
</dbReference>
<dbReference type="PANTHER" id="PTHR33867:SF1">
    <property type="entry name" value="RIBOSOME MATURATION FACTOR RIMP"/>
    <property type="match status" value="1"/>
</dbReference>
<dbReference type="Pfam" id="PF17384">
    <property type="entry name" value="DUF150_C"/>
    <property type="match status" value="1"/>
</dbReference>
<dbReference type="Pfam" id="PF02576">
    <property type="entry name" value="RimP_N"/>
    <property type="match status" value="1"/>
</dbReference>
<dbReference type="SUPFAM" id="SSF74942">
    <property type="entry name" value="YhbC-like, C-terminal domain"/>
    <property type="match status" value="1"/>
</dbReference>
<dbReference type="SUPFAM" id="SSF75420">
    <property type="entry name" value="YhbC-like, N-terminal domain"/>
    <property type="match status" value="1"/>
</dbReference>
<sequence length="152" mass="16840">MGLSTLEQKLTEMITAPVEALGYELVGIEFIRGRTSTLRIYIDSEDGINVDDCADVSHQVSAVLDVEDPISVAYNLEVSSPGLDRPMFTADHYARFQGEEVALVLRMAVQNRRKWQGIIKAVDGEMITVTVEGKDEVFALSNIQKANLVPHF</sequence>
<evidence type="ECO:0000255" key="1">
    <source>
        <dbReference type="HAMAP-Rule" id="MF_01077"/>
    </source>
</evidence>
<evidence type="ECO:0000305" key="2"/>
<reference key="1">
    <citation type="journal article" date="2008" name="Genome Res.">
        <title>Comparative genome analysis of Salmonella enteritidis PT4 and Salmonella gallinarum 287/91 provides insights into evolutionary and host adaptation pathways.</title>
        <authorList>
            <person name="Thomson N.R."/>
            <person name="Clayton D.J."/>
            <person name="Windhorst D."/>
            <person name="Vernikos G."/>
            <person name="Davidson S."/>
            <person name="Churcher C."/>
            <person name="Quail M.A."/>
            <person name="Stevens M."/>
            <person name="Jones M.A."/>
            <person name="Watson M."/>
            <person name="Barron A."/>
            <person name="Layton A."/>
            <person name="Pickard D."/>
            <person name="Kingsley R.A."/>
            <person name="Bignell A."/>
            <person name="Clark L."/>
            <person name="Harris B."/>
            <person name="Ormond D."/>
            <person name="Abdellah Z."/>
            <person name="Brooks K."/>
            <person name="Cherevach I."/>
            <person name="Chillingworth T."/>
            <person name="Woodward J."/>
            <person name="Norberczak H."/>
            <person name="Lord A."/>
            <person name="Arrowsmith C."/>
            <person name="Jagels K."/>
            <person name="Moule S."/>
            <person name="Mungall K."/>
            <person name="Saunders M."/>
            <person name="Whitehead S."/>
            <person name="Chabalgoity J.A."/>
            <person name="Maskell D."/>
            <person name="Humphreys T."/>
            <person name="Roberts M."/>
            <person name="Barrow P.A."/>
            <person name="Dougan G."/>
            <person name="Parkhill J."/>
        </authorList>
    </citation>
    <scope>NUCLEOTIDE SEQUENCE [LARGE SCALE GENOMIC DNA]</scope>
    <source>
        <strain>P125109</strain>
    </source>
</reference>
<keyword id="KW-0963">Cytoplasm</keyword>
<keyword id="KW-0690">Ribosome biogenesis</keyword>
<proteinExistence type="inferred from homology"/>
<name>RIMP_SALEP</name>